<protein>
    <recommendedName>
        <fullName evidence="1">Photosystem II reaction center protein L</fullName>
        <shortName evidence="1">PSII-L</shortName>
    </recommendedName>
</protein>
<dbReference type="EMBL" id="AP009339">
    <property type="protein sequence ID" value="BAF64959.1"/>
    <property type="molecule type" value="Genomic_DNA"/>
</dbReference>
<dbReference type="RefSeq" id="YP_001312218.1">
    <property type="nucleotide sequence ID" value="NC_009618.1"/>
</dbReference>
<dbReference type="SMR" id="A6H5J3"/>
<dbReference type="GeneID" id="5309564"/>
<dbReference type="GO" id="GO:0009535">
    <property type="term" value="C:chloroplast thylakoid membrane"/>
    <property type="evidence" value="ECO:0007669"/>
    <property type="project" value="UniProtKB-SubCell"/>
</dbReference>
<dbReference type="GO" id="GO:0009539">
    <property type="term" value="C:photosystem II reaction center"/>
    <property type="evidence" value="ECO:0007669"/>
    <property type="project" value="InterPro"/>
</dbReference>
<dbReference type="GO" id="GO:0015979">
    <property type="term" value="P:photosynthesis"/>
    <property type="evidence" value="ECO:0007669"/>
    <property type="project" value="UniProtKB-UniRule"/>
</dbReference>
<dbReference type="HAMAP" id="MF_01317">
    <property type="entry name" value="PSII_PsbL"/>
    <property type="match status" value="1"/>
</dbReference>
<dbReference type="InterPro" id="IPR003372">
    <property type="entry name" value="PSII_PsbL"/>
</dbReference>
<dbReference type="InterPro" id="IPR037266">
    <property type="entry name" value="PSII_PsbL_sf"/>
</dbReference>
<dbReference type="Pfam" id="PF02419">
    <property type="entry name" value="PsbL"/>
    <property type="match status" value="1"/>
</dbReference>
<dbReference type="SUPFAM" id="SSF161017">
    <property type="entry name" value="Photosystem II reaction center protein L, PsbL"/>
    <property type="match status" value="1"/>
</dbReference>
<gene>
    <name evidence="1" type="primary">psbL</name>
</gene>
<geneLocation type="chloroplast"/>
<feature type="chain" id="PRO_0000306231" description="Photosystem II reaction center protein L">
    <location>
        <begin position="1"/>
        <end position="38"/>
    </location>
</feature>
<feature type="transmembrane region" description="Helical" evidence="1">
    <location>
        <begin position="17"/>
        <end position="37"/>
    </location>
</feature>
<accession>A6H5J3</accession>
<organism>
    <name type="scientific">Cycas taitungensis</name>
    <name type="common">Prince sago</name>
    <name type="synonym">Cycas taiwaniana</name>
    <dbReference type="NCBI Taxonomy" id="54799"/>
    <lineage>
        <taxon>Eukaryota</taxon>
        <taxon>Viridiplantae</taxon>
        <taxon>Streptophyta</taxon>
        <taxon>Embryophyta</taxon>
        <taxon>Tracheophyta</taxon>
        <taxon>Spermatophyta</taxon>
        <taxon>Cycadidae</taxon>
        <taxon>Cycadales</taxon>
        <taxon>Cycadaceae</taxon>
        <taxon>Cycas</taxon>
    </lineage>
</organism>
<sequence length="38" mass="4437">MTQSNPNEQNVELNRTSLYWGLLLIFVLAVLFSNYSFN</sequence>
<name>PSBL_CYCTA</name>
<proteinExistence type="inferred from homology"/>
<comment type="function">
    <text evidence="1">One of the components of the core complex of photosystem II (PSII). PSII is a light-driven water:plastoquinone oxidoreductase that uses light energy to abstract electrons from H(2)O, generating O(2) and a proton gradient subsequently used for ATP formation. It consists of a core antenna complex that captures photons, and an electron transfer chain that converts photonic excitation into a charge separation. This subunit is found at the monomer-monomer interface and is required for correct PSII assembly and/or dimerization.</text>
</comment>
<comment type="subunit">
    <text evidence="1">PSII is composed of 1 copy each of membrane proteins PsbA, PsbB, PsbC, PsbD, PsbE, PsbF, PsbH, PsbI, PsbJ, PsbK, PsbL, PsbM, PsbT, PsbX, PsbY, PsbZ, Psb30/Ycf12, at least 3 peripheral proteins of the oxygen-evolving complex and a large number of cofactors. It forms dimeric complexes.</text>
</comment>
<comment type="subcellular location">
    <subcellularLocation>
        <location evidence="1">Plastid</location>
        <location evidence="1">Chloroplast thylakoid membrane</location>
        <topology evidence="1">Single-pass membrane protein</topology>
    </subcellularLocation>
</comment>
<comment type="similarity">
    <text evidence="1">Belongs to the PsbL family.</text>
</comment>
<evidence type="ECO:0000255" key="1">
    <source>
        <dbReference type="HAMAP-Rule" id="MF_01317"/>
    </source>
</evidence>
<reference key="1">
    <citation type="journal article" date="2007" name="Mol. Biol. Evol.">
        <title>Chloroplast genome (cpDNA) of Cycas taitungensis and 56 cp protein-coding genes of Gnetum parvifolium: insights into cpDNA evolution and phylogeny of extant seed plants.</title>
        <authorList>
            <person name="Wu C.-S."/>
            <person name="Wang Y.-N."/>
            <person name="Liu S.-M."/>
            <person name="Chaw S.-M."/>
        </authorList>
    </citation>
    <scope>NUCLEOTIDE SEQUENCE [LARGE SCALE GENOMIC DNA]</scope>
</reference>
<keyword id="KW-0150">Chloroplast</keyword>
<keyword id="KW-0472">Membrane</keyword>
<keyword id="KW-0602">Photosynthesis</keyword>
<keyword id="KW-0604">Photosystem II</keyword>
<keyword id="KW-0934">Plastid</keyword>
<keyword id="KW-0674">Reaction center</keyword>
<keyword id="KW-0793">Thylakoid</keyword>
<keyword id="KW-0812">Transmembrane</keyword>
<keyword id="KW-1133">Transmembrane helix</keyword>